<keyword id="KW-1185">Reference proteome</keyword>
<name>FA89A_RAT</name>
<gene>
    <name type="primary">Fam89a</name>
</gene>
<accession>Q6Q0N2</accession>
<organism>
    <name type="scientific">Rattus norvegicus</name>
    <name type="common">Rat</name>
    <dbReference type="NCBI Taxonomy" id="10116"/>
    <lineage>
        <taxon>Eukaryota</taxon>
        <taxon>Metazoa</taxon>
        <taxon>Chordata</taxon>
        <taxon>Craniata</taxon>
        <taxon>Vertebrata</taxon>
        <taxon>Euteleostomi</taxon>
        <taxon>Mammalia</taxon>
        <taxon>Eutheria</taxon>
        <taxon>Euarchontoglires</taxon>
        <taxon>Glires</taxon>
        <taxon>Rodentia</taxon>
        <taxon>Myomorpha</taxon>
        <taxon>Muroidea</taxon>
        <taxon>Muridae</taxon>
        <taxon>Murinae</taxon>
        <taxon>Rattus</taxon>
    </lineage>
</organism>
<reference key="1">
    <citation type="journal article" date="2004" name="Invest. Ophthalmol. Vis. Sci.">
        <title>Gene expression profile of the rat eye iridocorneal angle: NEIBank expressed sequence tag analysis.</title>
        <authorList>
            <person name="Ahmed F."/>
            <person name="Torrado M."/>
            <person name="Zinovieva R.D."/>
            <person name="Senatorov V.V."/>
            <person name="Wistow G."/>
            <person name="Tomarev S.I."/>
        </authorList>
    </citation>
    <scope>NUCLEOTIDE SEQUENCE [LARGE SCALE MRNA]</scope>
    <source>
        <strain>Wistar</strain>
    </source>
</reference>
<reference key="2">
    <citation type="journal article" date="2004" name="Genome Res.">
        <title>The status, quality, and expansion of the NIH full-length cDNA project: the Mammalian Gene Collection (MGC).</title>
        <authorList>
            <consortium name="The MGC Project Team"/>
        </authorList>
    </citation>
    <scope>NUCLEOTIDE SEQUENCE [LARGE SCALE MRNA]</scope>
    <source>
        <tissue>Placenta</tissue>
    </source>
</reference>
<comment type="similarity">
    <text evidence="2">Belongs to the FAM89 family.</text>
</comment>
<dbReference type="EMBL" id="AY569012">
    <property type="protein sequence ID" value="AAS75315.1"/>
    <property type="molecule type" value="mRNA"/>
</dbReference>
<dbReference type="EMBL" id="BC107921">
    <property type="protein sequence ID" value="AAI07922.1"/>
    <property type="molecule type" value="mRNA"/>
</dbReference>
<dbReference type="RefSeq" id="NP_001011711.1">
    <property type="nucleotide sequence ID" value="NM_001011711.2"/>
</dbReference>
<dbReference type="SMR" id="Q6Q0N2"/>
<dbReference type="FunCoup" id="Q6Q0N2">
    <property type="interactions" value="33"/>
</dbReference>
<dbReference type="STRING" id="10116.ENSRNOP00000025705"/>
<dbReference type="PhosphoSitePlus" id="Q6Q0N2"/>
<dbReference type="PaxDb" id="10116-ENSRNOP00000025705"/>
<dbReference type="Ensembl" id="ENSRNOT00000025705.8">
    <property type="protein sequence ID" value="ENSRNOP00000025705.4"/>
    <property type="gene ID" value="ENSRNOG00000019022.8"/>
</dbReference>
<dbReference type="GeneID" id="361441"/>
<dbReference type="KEGG" id="rno:361441"/>
<dbReference type="UCSC" id="RGD:1309879">
    <property type="organism name" value="rat"/>
</dbReference>
<dbReference type="AGR" id="RGD:1309879"/>
<dbReference type="CTD" id="375061"/>
<dbReference type="RGD" id="1309879">
    <property type="gene designation" value="Fam89a"/>
</dbReference>
<dbReference type="eggNOG" id="ENOG502S28T">
    <property type="taxonomic scope" value="Eukaryota"/>
</dbReference>
<dbReference type="GeneTree" id="ENSGT00940000153370"/>
<dbReference type="HOGENOM" id="CLU_128818_1_0_1"/>
<dbReference type="InParanoid" id="Q6Q0N2"/>
<dbReference type="OMA" id="MMENGFF"/>
<dbReference type="OrthoDB" id="1681166at2759"/>
<dbReference type="PhylomeDB" id="Q6Q0N2"/>
<dbReference type="PRO" id="PR:Q6Q0N2"/>
<dbReference type="Proteomes" id="UP000002494">
    <property type="component" value="Chromosome 19"/>
</dbReference>
<dbReference type="Bgee" id="ENSRNOG00000019022">
    <property type="expression patterns" value="Expressed in esophagus and 19 other cell types or tissues"/>
</dbReference>
<dbReference type="PANTHER" id="PTHR46949">
    <property type="entry name" value="LEUCINE REPEAT ADAPTER PROTEIN 25"/>
    <property type="match status" value="1"/>
</dbReference>
<dbReference type="PANTHER" id="PTHR46949:SF3">
    <property type="entry name" value="PROTEIN FAM89A"/>
    <property type="match status" value="1"/>
</dbReference>
<protein>
    <recommendedName>
        <fullName>Protein FAM89A</fullName>
    </recommendedName>
</protein>
<evidence type="ECO:0000256" key="1">
    <source>
        <dbReference type="SAM" id="MobiDB-lite"/>
    </source>
</evidence>
<evidence type="ECO:0000305" key="2"/>
<feature type="chain" id="PRO_0000271762" description="Protein FAM89A">
    <location>
        <begin position="1"/>
        <end position="176"/>
    </location>
</feature>
<feature type="region of interest" description="Disordered" evidence="1">
    <location>
        <begin position="140"/>
        <end position="165"/>
    </location>
</feature>
<sequence>MSGAGSAGMARGLRVDGLPPLPKSLSGLLHSAAGGAAGGWRHLERLYAQKSRIQDELNRGGAGGGGARAAGMRTKPPNLDAALALLRKEMVGLRQLDMTLLCQLYGLYESIQEYKGACQAASSLDCNYALENGFFDDDEDFQEQGSLRDGQGRGSPGDPSLPLTHLSSSDWILESI</sequence>
<proteinExistence type="evidence at transcript level"/>